<protein>
    <recommendedName>
        <fullName evidence="1">ATP synthase subunit alpha</fullName>
        <ecNumber evidence="1">7.1.2.2</ecNumber>
    </recommendedName>
    <alternativeName>
        <fullName evidence="1">ATP synthase F1 sector subunit alpha</fullName>
    </alternativeName>
    <alternativeName>
        <fullName evidence="1">F-ATPase subunit alpha</fullName>
    </alternativeName>
</protein>
<proteinExistence type="inferred from homology"/>
<organism>
    <name type="scientific">Mycobacteroides abscessus (strain ATCC 19977 / DSM 44196 / CCUG 20993 / CIP 104536 / JCM 13569 / NCTC 13031 / TMC 1543 / L948)</name>
    <name type="common">Mycobacterium abscessus</name>
    <dbReference type="NCBI Taxonomy" id="561007"/>
    <lineage>
        <taxon>Bacteria</taxon>
        <taxon>Bacillati</taxon>
        <taxon>Actinomycetota</taxon>
        <taxon>Actinomycetes</taxon>
        <taxon>Mycobacteriales</taxon>
        <taxon>Mycobacteriaceae</taxon>
        <taxon>Mycobacteroides</taxon>
        <taxon>Mycobacteroides abscessus</taxon>
    </lineage>
</organism>
<gene>
    <name evidence="1" type="primary">atpA</name>
    <name type="ordered locus">MAB_1451</name>
</gene>
<dbReference type="EC" id="7.1.2.2" evidence="1"/>
<dbReference type="EMBL" id="CU458896">
    <property type="protein sequence ID" value="CAM61537.1"/>
    <property type="molecule type" value="Genomic_DNA"/>
</dbReference>
<dbReference type="RefSeq" id="WP_005084634.1">
    <property type="nucleotide sequence ID" value="NZ_MLCG01000002.1"/>
</dbReference>
<dbReference type="SMR" id="B1MLW0"/>
<dbReference type="GeneID" id="93378396"/>
<dbReference type="KEGG" id="mab:MAB_1451"/>
<dbReference type="Proteomes" id="UP000007137">
    <property type="component" value="Chromosome"/>
</dbReference>
<dbReference type="GO" id="GO:0005886">
    <property type="term" value="C:plasma membrane"/>
    <property type="evidence" value="ECO:0007669"/>
    <property type="project" value="UniProtKB-SubCell"/>
</dbReference>
<dbReference type="GO" id="GO:0045259">
    <property type="term" value="C:proton-transporting ATP synthase complex"/>
    <property type="evidence" value="ECO:0007669"/>
    <property type="project" value="UniProtKB-KW"/>
</dbReference>
<dbReference type="GO" id="GO:0043531">
    <property type="term" value="F:ADP binding"/>
    <property type="evidence" value="ECO:0007669"/>
    <property type="project" value="TreeGrafter"/>
</dbReference>
<dbReference type="GO" id="GO:0005524">
    <property type="term" value="F:ATP binding"/>
    <property type="evidence" value="ECO:0007669"/>
    <property type="project" value="UniProtKB-UniRule"/>
</dbReference>
<dbReference type="GO" id="GO:0046933">
    <property type="term" value="F:proton-transporting ATP synthase activity, rotational mechanism"/>
    <property type="evidence" value="ECO:0007669"/>
    <property type="project" value="UniProtKB-UniRule"/>
</dbReference>
<dbReference type="CDD" id="cd18113">
    <property type="entry name" value="ATP-synt_F1_alpha_C"/>
    <property type="match status" value="1"/>
</dbReference>
<dbReference type="CDD" id="cd18116">
    <property type="entry name" value="ATP-synt_F1_alpha_N"/>
    <property type="match status" value="1"/>
</dbReference>
<dbReference type="CDD" id="cd01132">
    <property type="entry name" value="F1-ATPase_alpha_CD"/>
    <property type="match status" value="1"/>
</dbReference>
<dbReference type="FunFam" id="1.20.150.20:FF:000001">
    <property type="entry name" value="ATP synthase subunit alpha"/>
    <property type="match status" value="1"/>
</dbReference>
<dbReference type="FunFam" id="3.40.50.300:FF:000002">
    <property type="entry name" value="ATP synthase subunit alpha"/>
    <property type="match status" value="1"/>
</dbReference>
<dbReference type="Gene3D" id="2.40.30.20">
    <property type="match status" value="1"/>
</dbReference>
<dbReference type="Gene3D" id="1.20.150.20">
    <property type="entry name" value="ATP synthase alpha/beta chain, C-terminal domain"/>
    <property type="match status" value="1"/>
</dbReference>
<dbReference type="Gene3D" id="3.40.50.300">
    <property type="entry name" value="P-loop containing nucleotide triphosphate hydrolases"/>
    <property type="match status" value="1"/>
</dbReference>
<dbReference type="HAMAP" id="MF_01346">
    <property type="entry name" value="ATP_synth_alpha_bact"/>
    <property type="match status" value="1"/>
</dbReference>
<dbReference type="InterPro" id="IPR023366">
    <property type="entry name" value="ATP_synth_asu-like_sf"/>
</dbReference>
<dbReference type="InterPro" id="IPR000793">
    <property type="entry name" value="ATP_synth_asu_C"/>
</dbReference>
<dbReference type="InterPro" id="IPR038376">
    <property type="entry name" value="ATP_synth_asu_C_sf"/>
</dbReference>
<dbReference type="InterPro" id="IPR033732">
    <property type="entry name" value="ATP_synth_F1_a_nt-bd_dom"/>
</dbReference>
<dbReference type="InterPro" id="IPR005294">
    <property type="entry name" value="ATP_synth_F1_asu"/>
</dbReference>
<dbReference type="InterPro" id="IPR020003">
    <property type="entry name" value="ATPase_a/bsu_AS"/>
</dbReference>
<dbReference type="InterPro" id="IPR004100">
    <property type="entry name" value="ATPase_F1/V1/A1_a/bsu_N"/>
</dbReference>
<dbReference type="InterPro" id="IPR036121">
    <property type="entry name" value="ATPase_F1/V1/A1_a/bsu_N_sf"/>
</dbReference>
<dbReference type="InterPro" id="IPR000194">
    <property type="entry name" value="ATPase_F1/V1/A1_a/bsu_nucl-bd"/>
</dbReference>
<dbReference type="InterPro" id="IPR027417">
    <property type="entry name" value="P-loop_NTPase"/>
</dbReference>
<dbReference type="NCBIfam" id="TIGR00962">
    <property type="entry name" value="atpA"/>
    <property type="match status" value="1"/>
</dbReference>
<dbReference type="NCBIfam" id="NF009884">
    <property type="entry name" value="PRK13343.1"/>
    <property type="match status" value="1"/>
</dbReference>
<dbReference type="PANTHER" id="PTHR48082">
    <property type="entry name" value="ATP SYNTHASE SUBUNIT ALPHA, MITOCHONDRIAL"/>
    <property type="match status" value="1"/>
</dbReference>
<dbReference type="PANTHER" id="PTHR48082:SF2">
    <property type="entry name" value="ATP SYNTHASE SUBUNIT ALPHA, MITOCHONDRIAL"/>
    <property type="match status" value="1"/>
</dbReference>
<dbReference type="Pfam" id="PF00006">
    <property type="entry name" value="ATP-synt_ab"/>
    <property type="match status" value="1"/>
</dbReference>
<dbReference type="Pfam" id="PF00306">
    <property type="entry name" value="ATP-synt_ab_C"/>
    <property type="match status" value="1"/>
</dbReference>
<dbReference type="Pfam" id="PF02874">
    <property type="entry name" value="ATP-synt_ab_N"/>
    <property type="match status" value="1"/>
</dbReference>
<dbReference type="SUPFAM" id="SSF47917">
    <property type="entry name" value="C-terminal domain of alpha and beta subunits of F1 ATP synthase"/>
    <property type="match status" value="1"/>
</dbReference>
<dbReference type="SUPFAM" id="SSF50615">
    <property type="entry name" value="N-terminal domain of alpha and beta subunits of F1 ATP synthase"/>
    <property type="match status" value="1"/>
</dbReference>
<dbReference type="SUPFAM" id="SSF52540">
    <property type="entry name" value="P-loop containing nucleoside triphosphate hydrolases"/>
    <property type="match status" value="1"/>
</dbReference>
<dbReference type="PROSITE" id="PS00152">
    <property type="entry name" value="ATPASE_ALPHA_BETA"/>
    <property type="match status" value="1"/>
</dbReference>
<accession>B1MLW0</accession>
<keyword id="KW-0066">ATP synthesis</keyword>
<keyword id="KW-0067">ATP-binding</keyword>
<keyword id="KW-1003">Cell membrane</keyword>
<keyword id="KW-0139">CF(1)</keyword>
<keyword id="KW-0375">Hydrogen ion transport</keyword>
<keyword id="KW-0406">Ion transport</keyword>
<keyword id="KW-0472">Membrane</keyword>
<keyword id="KW-0547">Nucleotide-binding</keyword>
<keyword id="KW-1185">Reference proteome</keyword>
<keyword id="KW-1278">Translocase</keyword>
<keyword id="KW-0813">Transport</keyword>
<comment type="function">
    <text evidence="1">Produces ATP from ADP in the presence of a proton gradient across the membrane. The alpha chain is a regulatory subunit.</text>
</comment>
<comment type="catalytic activity">
    <reaction evidence="1">
        <text>ATP + H2O + 4 H(+)(in) = ADP + phosphate + 5 H(+)(out)</text>
        <dbReference type="Rhea" id="RHEA:57720"/>
        <dbReference type="ChEBI" id="CHEBI:15377"/>
        <dbReference type="ChEBI" id="CHEBI:15378"/>
        <dbReference type="ChEBI" id="CHEBI:30616"/>
        <dbReference type="ChEBI" id="CHEBI:43474"/>
        <dbReference type="ChEBI" id="CHEBI:456216"/>
        <dbReference type="EC" id="7.1.2.2"/>
    </reaction>
</comment>
<comment type="subunit">
    <text evidence="1">F-type ATPases have 2 components, CF(1) - the catalytic core - and CF(0) - the membrane proton channel. CF(1) has five subunits: alpha(3), beta(3), gamma(1), delta(1), epsilon(1). CF(0) has three main subunits: a(1), b(2) and c(9-12). The alpha and beta chains form an alternating ring which encloses part of the gamma chain. CF(1) is attached to CF(0) by a central stalk formed by the gamma and epsilon chains, while a peripheral stalk is formed by the delta and b chains.</text>
</comment>
<comment type="subcellular location">
    <subcellularLocation>
        <location evidence="1">Cell membrane</location>
        <topology evidence="1">Peripheral membrane protein</topology>
    </subcellularLocation>
</comment>
<comment type="similarity">
    <text evidence="1">Belongs to the ATPase alpha/beta chains family.</text>
</comment>
<evidence type="ECO:0000255" key="1">
    <source>
        <dbReference type="HAMAP-Rule" id="MF_01346"/>
    </source>
</evidence>
<reference key="1">
    <citation type="journal article" date="2009" name="PLoS ONE">
        <title>Non mycobacterial virulence genes in the genome of the emerging pathogen Mycobacterium abscessus.</title>
        <authorList>
            <person name="Ripoll F."/>
            <person name="Pasek S."/>
            <person name="Schenowitz C."/>
            <person name="Dossat C."/>
            <person name="Barbe V."/>
            <person name="Rottman M."/>
            <person name="Macheras E."/>
            <person name="Heym B."/>
            <person name="Herrmann J.L."/>
            <person name="Daffe M."/>
            <person name="Brosch R."/>
            <person name="Risler J.L."/>
            <person name="Gaillard J.L."/>
        </authorList>
    </citation>
    <scope>NUCLEOTIDE SEQUENCE [LARGE SCALE GENOMIC DNA]</scope>
    <source>
        <strain>ATCC 19977 / DSM 44196 / CCUG 20993 / CIP 104536 / JCM 13569 / NCTC 13031 / TMC 1543 / L948</strain>
    </source>
</reference>
<name>ATPA_MYCA9</name>
<feature type="chain" id="PRO_1000143411" description="ATP synthase subunit alpha">
    <location>
        <begin position="1"/>
        <end position="548"/>
    </location>
</feature>
<feature type="binding site" evidence="1">
    <location>
        <begin position="172"/>
        <end position="179"/>
    </location>
    <ligand>
        <name>ATP</name>
        <dbReference type="ChEBI" id="CHEBI:30616"/>
    </ligand>
</feature>
<feature type="site" description="Required for activity" evidence="1">
    <location>
        <position position="373"/>
    </location>
</feature>
<sequence>MTELTISSADISGAIEQYVATFSADPTREEIGIVSDAGDGIAHVEGLPSVMTQELLEFPGGVLGVALNLDERSVGTVVLGDFQDIEEGQQVKRTGEVLSVPVGDAFLGRVINPLGQPIDGRGDIEAETRRALELQAPSVVQRQSVSEPLQTGIKAIDSQTPIGRGQRQLIIGDRKTGKTAVCIDTILNQKQAWETGDPAQQVRCIYVAVGQKGSTVAAVRRTLDEAGALEYTTIVAAPASDAAGFKWLAPYTGSALGQHWMYQGKHVLIVFDDLTKQAEAYRAISLLLRRPPGREAYPGDVFYLHSRLLERCAKLSDELGAGSLTGLPIIETKANDISAYIPTNVISITDGQCFLQTDLFNQGVRPAVNVGVSVSRVGGAAQIKAMKEVAGSLRLELSQYRELEAFAAFASDLDATSKAQLERGARLVELLKQPQNSPYPVEEQVVAIYLGTGGHLDSVPVEDVMRFEQEFLDHVRGSHADILADIRETKKFSEDTETKLTNAVNAFKKSFAATDGSSVEVKGVAAEALDESAVGQETVQVRKPAPKK</sequence>